<gene>
    <name type="primary">cry1Bb</name>
    <name type="synonym">cryET5</name>
    <name type="synonym">cryIB(b)</name>
</gene>
<reference key="1">
    <citation type="patent" date="1994-06-21" number="US5322687">
        <title>Bacillus thuringiensis cryet4 and cryet5 toxin genes and proteins toxic to lepidopteran insects.</title>
        <authorList>
            <person name="Donovan W.P."/>
            <person name="Tan Y."/>
            <person name="Jany C.S."/>
            <person name="Gonzalez J.M. Jr."/>
        </authorList>
    </citation>
    <scope>NUCLEOTIDE SEQUENCE [GENOMIC DNA]</scope>
    <source>
        <strain>NRRL B-21110 / EG5847</strain>
    </source>
</reference>
<protein>
    <recommendedName>
        <fullName>Pesticidal crystal protein Cry1Bb</fullName>
    </recommendedName>
    <alternativeName>
        <fullName>140 kDa crystal protein</fullName>
    </alternativeName>
    <alternativeName>
        <fullName>Crystaline entomocidal protoxin</fullName>
    </alternativeName>
    <alternativeName>
        <fullName>Insecticidal delta-endotoxin CryIB(b)</fullName>
    </alternativeName>
</protein>
<comment type="function">
    <text>Promotes colloidosmotic lysis by binding to the midgut epithelial cells of many lepidopteran larvae.</text>
</comment>
<comment type="developmental stage">
    <text>The crystal protein is produced during sporulation and is accumulated both as an inclusion and as part of the spore coat.</text>
</comment>
<comment type="miscellaneous">
    <text>Toxic segment of the protein is located in the N-terminus.</text>
</comment>
<comment type="similarity">
    <text evidence="1">Belongs to the delta endotoxin family.</text>
</comment>
<name>CR1BB_BACTU</name>
<keyword id="KW-0749">Sporulation</keyword>
<keyword id="KW-0800">Toxin</keyword>
<keyword id="KW-0843">Virulence</keyword>
<accession>Q45739</accession>
<evidence type="ECO:0000305" key="1"/>
<organism>
    <name type="scientific">Bacillus thuringiensis</name>
    <dbReference type="NCBI Taxonomy" id="1428"/>
    <lineage>
        <taxon>Bacteria</taxon>
        <taxon>Bacillati</taxon>
        <taxon>Bacillota</taxon>
        <taxon>Bacilli</taxon>
        <taxon>Bacillales</taxon>
        <taxon>Bacillaceae</taxon>
        <taxon>Bacillus</taxon>
        <taxon>Bacillus cereus group</taxon>
    </lineage>
</organism>
<sequence length="1229" mass="139771">MTSNRKNENEIINALSIPTVSNPSTQMNLSPDARIEDSLCVAEVNNIDPFVSASTVQTGINIAGRILGVLGVPFAGQLASFYSFLVGELWPSGRDPWEIFLEHVEQLIRQQVTENTRNTAIARLEGLGRGYRSYQQALETWLDNRNDARSRSIILERYVALELDITTAIPLFRIRNEEVPLLMVYAQAANLHLLLLRDASLFGSEWGMASSDVNQYYQEQIRYTEEYSNHCVQWYNTGLNNLRGTNAESWLRYNQFRRDLTLGVLDLVALFPSYDTRTYPINTSAQLTREIYTDPIGRTNAPSGFASTNWFNNNAPSFSAIEAAIFRPPHLLDFPEQLTIYSASSRWSSTQHMNYWVGHRLNFRPIGGTLNTSTQGLTNNTSINPVTLQFTSRDVYRTESNAGTNILFTTPVNGVPWARFNFINPQNIYERGATTYSQPYQGVGIQLFDSETELPPETTERPNYESYSHRLSHIGLIIGNTLRAPVYSWTHRSADRTNTIGPNRITQIPLVKALNLHSGVTVVGGPGFTGGDILRRTNTGTFGDIRLNINVPLSQRYRVRIRYASTTDLQFFTRINGTTVNIGNFSRTMNRGDNLEYRSFRTAGFSTPFNFLNAQSTFTLGAQSFSNQEVYIDRVEFVPAEVTFEAEYDLERAQKAVNALFTSTNPRRLKTDVTDYHIDQVSNMVACLSDEFCLDEKRELFEKVKYAKRLSDERNLLQDPNFTFISGQLSFASIDGQSNFPSINELSEHGWWGSANVTIQEGNDVFKENYVTLPGTFNECYPNYLYQKIGESELKAYTRYQLRGYIEDSQDLEIYLIRYNAKHETLDVPGTDSLWPLSVESPIGRCGEPNRCAPHFEWNPDLDCSCRDGERCAHHSHHFTLDIDVGCTDLHENLGVWVVFKIKTQEGYARLGNLEFIEEKPLIGEALSRVKRAEKKWRDKREKLQLETKRVYTEAKEAVDALFVDSQYDQLQADTNIGMIHAADKLVHRIREAYLSELPVIPGVNAEIFEELEGHIITAMSLYDARNVVKNGDFNNGLTCWNVKGHVDVQQSHHRSDLVIPEWEAEVSQAVRVCPGRGYILRVTAYKEGYGEGCVTIHEIENNTDELKFKNCEEEEVYPTDTGTCNDYTAHQGTAACNSRNAGYEDAYEVDTTASVNYKPTYEEETYTDVRRDNHCEYDRGYVNYPPVPAGYVTKELEYFPETDTVWIEIGETEGKFIVDSVELLLMEE</sequence>
<proteinExistence type="evidence at transcript level"/>
<dbReference type="EMBL" id="L32020">
    <property type="protein sequence ID" value="AAA22344.1"/>
    <property type="molecule type" value="Genomic_DNA"/>
</dbReference>
<dbReference type="RefSeq" id="WP_000203375.1">
    <property type="nucleotide sequence ID" value="NZ_LDHF01000179.1"/>
</dbReference>
<dbReference type="SMR" id="Q45739"/>
<dbReference type="GO" id="GO:0005102">
    <property type="term" value="F:signaling receptor binding"/>
    <property type="evidence" value="ECO:0007669"/>
    <property type="project" value="InterPro"/>
</dbReference>
<dbReference type="GO" id="GO:0090729">
    <property type="term" value="F:toxin activity"/>
    <property type="evidence" value="ECO:0007669"/>
    <property type="project" value="UniProtKB-KW"/>
</dbReference>
<dbReference type="GO" id="GO:0030435">
    <property type="term" value="P:sporulation resulting in formation of a cellular spore"/>
    <property type="evidence" value="ECO:0007669"/>
    <property type="project" value="UniProtKB-KW"/>
</dbReference>
<dbReference type="GO" id="GO:0001907">
    <property type="term" value="P:symbiont-mediated killing of host cell"/>
    <property type="evidence" value="ECO:0007669"/>
    <property type="project" value="InterPro"/>
</dbReference>
<dbReference type="CDD" id="cd04085">
    <property type="entry name" value="delta_endotoxin_C"/>
    <property type="match status" value="1"/>
</dbReference>
<dbReference type="Gene3D" id="2.60.120.260">
    <property type="entry name" value="Galactose-binding domain-like"/>
    <property type="match status" value="1"/>
</dbReference>
<dbReference type="Gene3D" id="2.100.10.10">
    <property type="entry name" value="Pesticidal crystal protein, central domain"/>
    <property type="match status" value="1"/>
</dbReference>
<dbReference type="Gene3D" id="1.20.190.10">
    <property type="entry name" value="Pesticidal crystal protein, N-terminal domain"/>
    <property type="match status" value="1"/>
</dbReference>
<dbReference type="InterPro" id="IPR048645">
    <property type="entry name" value="Cry1Ac-like_dom-VII"/>
</dbReference>
<dbReference type="InterPro" id="IPR041587">
    <property type="entry name" value="Cry_V"/>
</dbReference>
<dbReference type="InterPro" id="IPR008979">
    <property type="entry name" value="Galactose-bd-like_sf"/>
</dbReference>
<dbReference type="InterPro" id="IPR038979">
    <property type="entry name" value="Pest_crys"/>
</dbReference>
<dbReference type="InterPro" id="IPR005638">
    <property type="entry name" value="Pest_crys_dom-III"/>
</dbReference>
<dbReference type="InterPro" id="IPR005639">
    <property type="entry name" value="Pest_crys_dom_I"/>
</dbReference>
<dbReference type="InterPro" id="IPR036716">
    <property type="entry name" value="Pest_crys_N_sf"/>
</dbReference>
<dbReference type="InterPro" id="IPR036399">
    <property type="entry name" value="Pest_cryst_cen_dom_sf"/>
</dbReference>
<dbReference type="InterPro" id="IPR001178">
    <property type="entry name" value="Pest_cryst_dom_II"/>
</dbReference>
<dbReference type="PANTHER" id="PTHR37003">
    <property type="entry name" value="ENDOTOXIN_N DOMAIN-CONTAINING PROTEIN-RELATED"/>
    <property type="match status" value="1"/>
</dbReference>
<dbReference type="PANTHER" id="PTHR37003:SF2">
    <property type="entry name" value="PESTICIDAL CRYSTAL PROTEIN N-TERMINAL DOMAIN-CONTAINING PROTEIN"/>
    <property type="match status" value="1"/>
</dbReference>
<dbReference type="Pfam" id="PF17997">
    <property type="entry name" value="Cry1Ac_D5"/>
    <property type="match status" value="1"/>
</dbReference>
<dbReference type="Pfam" id="PF21463">
    <property type="entry name" value="Cry1Ac_dom-VII"/>
    <property type="match status" value="1"/>
</dbReference>
<dbReference type="Pfam" id="PF03944">
    <property type="entry name" value="Endotoxin_C"/>
    <property type="match status" value="1"/>
</dbReference>
<dbReference type="Pfam" id="PF00555">
    <property type="entry name" value="Endotoxin_M"/>
    <property type="match status" value="1"/>
</dbReference>
<dbReference type="Pfam" id="PF03945">
    <property type="entry name" value="Endotoxin_N"/>
    <property type="match status" value="1"/>
</dbReference>
<dbReference type="SUPFAM" id="SSF51096">
    <property type="entry name" value="delta-Endotoxin (insectocide), middle domain"/>
    <property type="match status" value="1"/>
</dbReference>
<dbReference type="SUPFAM" id="SSF56849">
    <property type="entry name" value="delta-Endotoxin (insectocide), N-terminal domain"/>
    <property type="match status" value="1"/>
</dbReference>
<dbReference type="SUPFAM" id="SSF49785">
    <property type="entry name" value="Galactose-binding domain-like"/>
    <property type="match status" value="1"/>
</dbReference>
<feature type="chain" id="PRO_0000174031" description="Pesticidal crystal protein Cry1Bb">
    <location>
        <begin position="1"/>
        <end position="1229"/>
    </location>
</feature>